<name>UREG_YEREN</name>
<organism>
    <name type="scientific">Yersinia enterocolitica</name>
    <dbReference type="NCBI Taxonomy" id="630"/>
    <lineage>
        <taxon>Bacteria</taxon>
        <taxon>Pseudomonadati</taxon>
        <taxon>Pseudomonadota</taxon>
        <taxon>Gammaproteobacteria</taxon>
        <taxon>Enterobacterales</taxon>
        <taxon>Yersiniaceae</taxon>
        <taxon>Yersinia</taxon>
    </lineage>
</organism>
<keyword id="KW-0143">Chaperone</keyword>
<keyword id="KW-0963">Cytoplasm</keyword>
<keyword id="KW-0342">GTP-binding</keyword>
<keyword id="KW-0996">Nickel insertion</keyword>
<keyword id="KW-0547">Nucleotide-binding</keyword>
<keyword id="KW-0843">Virulence</keyword>
<reference key="1">
    <citation type="journal article" date="1994" name="Gene">
        <title>Characterisation of the urease-encoding gene complex of Yersinia enterocolitica.</title>
        <authorList>
            <person name="de Koning-Ward T.F."/>
            <person name="Ward A.C."/>
            <person name="Robins-Browne R.M."/>
        </authorList>
    </citation>
    <scope>NUCLEOTIDE SEQUENCE [GENOMIC DNA]</scope>
    <source>
        <strain>A2635 / Serotype O:8</strain>
    </source>
</reference>
<reference key="2">
    <citation type="journal article" date="1995" name="Infect. Immun.">
        <title>Contribution of urease to acid tolerance in Yersinia enterocolitica.</title>
        <authorList>
            <person name="de Koning-Ward T.F."/>
            <person name="Robins-Browne R.M."/>
        </authorList>
    </citation>
    <scope>ROLE IN VIRULENCE</scope>
    <source>
        <strain>W22703 / Serogroup O:9</strain>
    </source>
</reference>
<protein>
    <recommendedName>
        <fullName evidence="1">Urease accessory protein UreG</fullName>
    </recommendedName>
</protein>
<dbReference type="EMBL" id="L24101">
    <property type="protein sequence ID" value="AAA50999.1"/>
    <property type="molecule type" value="Genomic_DNA"/>
</dbReference>
<dbReference type="SMR" id="P42871"/>
<dbReference type="GO" id="GO:0005737">
    <property type="term" value="C:cytoplasm"/>
    <property type="evidence" value="ECO:0007669"/>
    <property type="project" value="UniProtKB-SubCell"/>
</dbReference>
<dbReference type="GO" id="GO:0005525">
    <property type="term" value="F:GTP binding"/>
    <property type="evidence" value="ECO:0007669"/>
    <property type="project" value="UniProtKB-KW"/>
</dbReference>
<dbReference type="GO" id="GO:0003924">
    <property type="term" value="F:GTPase activity"/>
    <property type="evidence" value="ECO:0007669"/>
    <property type="project" value="InterPro"/>
</dbReference>
<dbReference type="GO" id="GO:0016151">
    <property type="term" value="F:nickel cation binding"/>
    <property type="evidence" value="ECO:0007669"/>
    <property type="project" value="UniProtKB-UniRule"/>
</dbReference>
<dbReference type="GO" id="GO:0043419">
    <property type="term" value="P:urea catabolic process"/>
    <property type="evidence" value="ECO:0007669"/>
    <property type="project" value="InterPro"/>
</dbReference>
<dbReference type="Gene3D" id="3.40.50.300">
    <property type="entry name" value="P-loop containing nucleotide triphosphate hydrolases"/>
    <property type="match status" value="1"/>
</dbReference>
<dbReference type="HAMAP" id="MF_01389">
    <property type="entry name" value="UreG"/>
    <property type="match status" value="1"/>
</dbReference>
<dbReference type="InterPro" id="IPR003495">
    <property type="entry name" value="CobW/HypB/UreG_nucleotide-bd"/>
</dbReference>
<dbReference type="InterPro" id="IPR027417">
    <property type="entry name" value="P-loop_NTPase"/>
</dbReference>
<dbReference type="InterPro" id="IPR004400">
    <property type="entry name" value="UreG"/>
</dbReference>
<dbReference type="NCBIfam" id="TIGR00101">
    <property type="entry name" value="ureG"/>
    <property type="match status" value="1"/>
</dbReference>
<dbReference type="PANTHER" id="PTHR31715">
    <property type="entry name" value="UREASE ACCESSORY PROTEIN G"/>
    <property type="match status" value="1"/>
</dbReference>
<dbReference type="PANTHER" id="PTHR31715:SF0">
    <property type="entry name" value="UREASE ACCESSORY PROTEIN G"/>
    <property type="match status" value="1"/>
</dbReference>
<dbReference type="Pfam" id="PF02492">
    <property type="entry name" value="cobW"/>
    <property type="match status" value="1"/>
</dbReference>
<dbReference type="PIRSF" id="PIRSF005624">
    <property type="entry name" value="Ni-bind_GTPase"/>
    <property type="match status" value="1"/>
</dbReference>
<dbReference type="SUPFAM" id="SSF52540">
    <property type="entry name" value="P-loop containing nucleoside triphosphate hydrolases"/>
    <property type="match status" value="1"/>
</dbReference>
<evidence type="ECO:0000255" key="1">
    <source>
        <dbReference type="HAMAP-Rule" id="MF_01389"/>
    </source>
</evidence>
<evidence type="ECO:0000269" key="2">
    <source>
    </source>
</evidence>
<proteinExistence type="inferred from homology"/>
<sequence>MNSHSTDKRKKITRIGIGGPVGSGKTAIIEVITPILIKRGIKPLIITNDIVTTEDAKQVKRTLKGILDEEKILGVETGACPHTAVREDPSMNIAAVEEMEERFPDSNLIMIESGGDNLTLTFSPALADFYIYVIDVAEGEKIPRKNGPGLVQADILVINKIDLAPYVGASLDVMESDTKVVRGERPYILTNCKTGQGIEELVDMIMRDFLFTHVQPQGEHA</sequence>
<accession>P42871</accession>
<feature type="chain" id="PRO_0000067676" description="Urease accessory protein UreG">
    <location>
        <begin position="1"/>
        <end position="221"/>
    </location>
</feature>
<feature type="binding site" evidence="1">
    <location>
        <begin position="19"/>
        <end position="26"/>
    </location>
    <ligand>
        <name>GTP</name>
        <dbReference type="ChEBI" id="CHEBI:37565"/>
    </ligand>
</feature>
<gene>
    <name evidence="1" type="primary">ureG</name>
</gene>
<comment type="function">
    <text evidence="1">Facilitates the functional incorporation of the urease nickel metallocenter. This process requires GTP hydrolysis, probably effectuated by UreG.</text>
</comment>
<comment type="function">
    <text evidence="2">Expression of the urease operon increases the likelihood of bacterial survival by contributing to acid resistance in vitro and in vivo in BALB/c mice. Y.enterocolitica enters the body via an oral path and must survive the acidic stomach before being able to colonize the intestinal mucosa (PubMed:7558281).</text>
</comment>
<comment type="subunit">
    <text evidence="1">Homodimer. UreD, UreF and UreG form a complex that acts as a GTP-hydrolysis-dependent molecular chaperone, activating the urease apoprotein by helping to assemble the nickel containing metallocenter of UreC. The UreE protein probably delivers the nickel.</text>
</comment>
<comment type="subcellular location">
    <subcellularLocation>
        <location evidence="1">Cytoplasm</location>
    </subcellularLocation>
</comment>
<comment type="similarity">
    <text evidence="1">Belongs to the SIMIBI class G3E GTPase family. UreG subfamily.</text>
</comment>